<protein>
    <recommendedName>
        <fullName>Aquaporin PIP1.1</fullName>
    </recommendedName>
    <alternativeName>
        <fullName>Plasma membrane aquaporin 1</fullName>
        <shortName>Aquaporin 1</shortName>
    </alternativeName>
    <alternativeName>
        <fullName>Plasma membrane intrinsic protein 1a</fullName>
        <shortName>PIP1a</shortName>
    </alternativeName>
</protein>
<evidence type="ECO:0000255" key="1"/>
<evidence type="ECO:0000256" key="2">
    <source>
        <dbReference type="SAM" id="MobiDB-lite"/>
    </source>
</evidence>
<evidence type="ECO:0000305" key="3"/>
<comment type="function">
    <text>Water channel required to facilitate the transport of water across cell membrane. Its function is impaired by Hg(2+).</text>
</comment>
<comment type="subcellular location">
    <subcellularLocation>
        <location>Cell membrane</location>
        <topology>Multi-pass membrane protein</topology>
    </subcellularLocation>
</comment>
<comment type="domain">
    <text>Aquaporins contain two tandem repeats each containing three membrane-spanning domains and a pore-forming loop with the signature motif Asn-Pro-Ala (NPA).</text>
</comment>
<comment type="similarity">
    <text evidence="3">Belongs to the MIP/aquaporin (TC 1.A.8) family. PIP (TC 1.A.8.11) subfamily.</text>
</comment>
<feature type="chain" id="PRO_0000064046" description="Aquaporin PIP1.1">
    <location>
        <begin position="1"/>
        <end position="286"/>
    </location>
</feature>
<feature type="topological domain" description="Cytoplasmic" evidence="1">
    <location>
        <begin position="1"/>
        <end position="54"/>
    </location>
</feature>
<feature type="transmembrane region" description="Helical; Name=1" evidence="1">
    <location>
        <begin position="55"/>
        <end position="75"/>
    </location>
</feature>
<feature type="topological domain" description="Extracellular" evidence="1">
    <location>
        <begin position="76"/>
        <end position="91"/>
    </location>
</feature>
<feature type="transmembrane region" description="Helical; Name=2" evidence="1">
    <location>
        <begin position="92"/>
        <end position="112"/>
    </location>
</feature>
<feature type="topological domain" description="Cytoplasmic" evidence="1">
    <location>
        <begin position="113"/>
        <end position="132"/>
    </location>
</feature>
<feature type="transmembrane region" description="Helical; Name=3" evidence="1">
    <location>
        <begin position="133"/>
        <end position="153"/>
    </location>
</feature>
<feature type="topological domain" description="Extracellular" evidence="1">
    <location>
        <begin position="154"/>
        <end position="174"/>
    </location>
</feature>
<feature type="transmembrane region" description="Helical; Name=4" evidence="1">
    <location>
        <begin position="175"/>
        <end position="195"/>
    </location>
</feature>
<feature type="topological domain" description="Cytoplasmic" evidence="1">
    <location>
        <begin position="196"/>
        <end position="206"/>
    </location>
</feature>
<feature type="transmembrane region" description="Helical; Name=5" evidence="1">
    <location>
        <begin position="207"/>
        <end position="229"/>
    </location>
</feature>
<feature type="topological domain" description="Extracellular" evidence="1">
    <location>
        <begin position="230"/>
        <end position="256"/>
    </location>
</feature>
<feature type="transmembrane region" description="Helical; Name=6" evidence="1">
    <location>
        <begin position="257"/>
        <end position="277"/>
    </location>
</feature>
<feature type="topological domain" description="Cytoplasmic" evidence="1">
    <location>
        <begin position="278"/>
        <end position="286"/>
    </location>
</feature>
<feature type="region of interest" description="Disordered" evidence="2">
    <location>
        <begin position="1"/>
        <end position="34"/>
    </location>
</feature>
<feature type="short sequence motif" description="NPA 1">
    <location>
        <begin position="114"/>
        <end position="116"/>
    </location>
</feature>
<feature type="short sequence motif" description="NPA 2">
    <location>
        <begin position="235"/>
        <end position="237"/>
    </location>
</feature>
<reference key="1">
    <citation type="journal article" date="2001" name="Plant Mol. Biol. Rep.">
        <title>A simple method for in situ hybridyzation to RNA in guard cells of Vicia faba L.: the expression of aquaporins in guard cells.</title>
        <authorList>
            <person name="Sun M.-H."/>
            <person name="Xu W."/>
            <person name="Zhu Y.-F."/>
            <person name="Su W.-H."/>
            <person name="Tang Z.-C."/>
        </authorList>
    </citation>
    <scope>NUCLEOTIDE SEQUENCE [MRNA]</scope>
</reference>
<reference key="2">
    <citation type="submission" date="2000-05" db="EMBL/GenBank/DDBJ databases">
        <title>Vicia faba L. aquaporin mRNA.</title>
        <authorList>
            <person name="Sun M.-H."/>
            <person name="Su W.-H."/>
            <person name="Tang Z.-C."/>
        </authorList>
    </citation>
    <scope>NUCLEOTIDE SEQUENCE [MRNA]</scope>
</reference>
<dbReference type="EMBL" id="AJ289701">
    <property type="protein sequence ID" value="CAB93959.1"/>
    <property type="molecule type" value="mRNA"/>
</dbReference>
<dbReference type="EMBL" id="AF266760">
    <property type="protein sequence ID" value="AAF78062.1"/>
    <property type="molecule type" value="mRNA"/>
</dbReference>
<dbReference type="SMR" id="P61838"/>
<dbReference type="GO" id="GO:0005886">
    <property type="term" value="C:plasma membrane"/>
    <property type="evidence" value="ECO:0007669"/>
    <property type="project" value="UniProtKB-SubCell"/>
</dbReference>
<dbReference type="GO" id="GO:0015267">
    <property type="term" value="F:channel activity"/>
    <property type="evidence" value="ECO:0007669"/>
    <property type="project" value="InterPro"/>
</dbReference>
<dbReference type="CDD" id="cd00333">
    <property type="entry name" value="MIP"/>
    <property type="match status" value="1"/>
</dbReference>
<dbReference type="FunFam" id="1.20.1080.10:FF:000001">
    <property type="entry name" value="Probable aquaporin PIP1-2"/>
    <property type="match status" value="1"/>
</dbReference>
<dbReference type="Gene3D" id="1.20.1080.10">
    <property type="entry name" value="Glycerol uptake facilitator protein"/>
    <property type="match status" value="1"/>
</dbReference>
<dbReference type="InterPro" id="IPR023271">
    <property type="entry name" value="Aquaporin-like"/>
</dbReference>
<dbReference type="InterPro" id="IPR034294">
    <property type="entry name" value="Aquaporin_transptr"/>
</dbReference>
<dbReference type="InterPro" id="IPR000425">
    <property type="entry name" value="MIP"/>
</dbReference>
<dbReference type="InterPro" id="IPR022357">
    <property type="entry name" value="MIP_CS"/>
</dbReference>
<dbReference type="NCBIfam" id="TIGR00861">
    <property type="entry name" value="MIP"/>
    <property type="match status" value="1"/>
</dbReference>
<dbReference type="PANTHER" id="PTHR45687">
    <property type="entry name" value="AQUAPORIN OR AQUAGLYCEROPORIN RELATED"/>
    <property type="match status" value="1"/>
</dbReference>
<dbReference type="Pfam" id="PF00230">
    <property type="entry name" value="MIP"/>
    <property type="match status" value="1"/>
</dbReference>
<dbReference type="PRINTS" id="PR00783">
    <property type="entry name" value="MINTRINSICP"/>
</dbReference>
<dbReference type="SUPFAM" id="SSF81338">
    <property type="entry name" value="Aquaporin-like"/>
    <property type="match status" value="1"/>
</dbReference>
<dbReference type="PROSITE" id="PS00221">
    <property type="entry name" value="MIP"/>
    <property type="match status" value="1"/>
</dbReference>
<accession>P61838</accession>
<accession>P43285</accession>
<accession>Q8L9H0</accession>
<accession>Q9LDT6</accession>
<keyword id="KW-1003">Cell membrane</keyword>
<keyword id="KW-0472">Membrane</keyword>
<keyword id="KW-0677">Repeat</keyword>
<keyword id="KW-0812">Transmembrane</keyword>
<keyword id="KW-1133">Transmembrane helix</keyword>
<keyword id="KW-0813">Transport</keyword>
<proteinExistence type="evidence at transcript level"/>
<name>PIP11_VICFA</name>
<organism>
    <name type="scientific">Vicia faba</name>
    <name type="common">Broad bean</name>
    <name type="synonym">Faba vulgaris</name>
    <dbReference type="NCBI Taxonomy" id="3906"/>
    <lineage>
        <taxon>Eukaryota</taxon>
        <taxon>Viridiplantae</taxon>
        <taxon>Streptophyta</taxon>
        <taxon>Embryophyta</taxon>
        <taxon>Tracheophyta</taxon>
        <taxon>Spermatophyta</taxon>
        <taxon>Magnoliopsida</taxon>
        <taxon>eudicotyledons</taxon>
        <taxon>Gunneridae</taxon>
        <taxon>Pentapetalae</taxon>
        <taxon>rosids</taxon>
        <taxon>fabids</taxon>
        <taxon>Fabales</taxon>
        <taxon>Fabaceae</taxon>
        <taxon>Papilionoideae</taxon>
        <taxon>50 kb inversion clade</taxon>
        <taxon>NPAAA clade</taxon>
        <taxon>Hologalegina</taxon>
        <taxon>IRL clade</taxon>
        <taxon>Fabeae</taxon>
        <taxon>Vicia</taxon>
    </lineage>
</organism>
<sequence>MEGKEEDVRVGANKFPERQPIGTSAQSDKDYKEPPPAPFFEPGELSSWSFWRAGIAEFIATFLFLYITVLTVMGVKRSPNMCASVGIQGIAWAFGGMIFALVYCTAGISGGHINPAVTFGLFLARKLSLTRALYYIVMQCLGAICGAGVVKGFQPKQYQALGGGANTVAHGYTKGSGLGAEIIGTFVLVYTVFSATDAKRNARDSHVPILAPLPIGFAVFLVHLATIPITGTGINPARSLGAAIIYNKDHSWDDHWVFWVGPFIGAALAALYHVVVIRAIPFKSRS</sequence>
<gene>
    <name type="primary">PIP1.1</name>
    <name type="synonym">AQ1</name>
    <name type="synonym">PIP1A</name>
</gene>